<name>LOLD_HYDCU</name>
<reference key="1">
    <citation type="journal article" date="2006" name="PLoS Biol.">
        <title>The genome of deep-sea vent chemolithoautotroph Thiomicrospira crunogena XCL-2.</title>
        <authorList>
            <person name="Scott K.M."/>
            <person name="Sievert S.M."/>
            <person name="Abril F.N."/>
            <person name="Ball L.A."/>
            <person name="Barrett C.J."/>
            <person name="Blake R.A."/>
            <person name="Boller A.J."/>
            <person name="Chain P.S.G."/>
            <person name="Clark J.A."/>
            <person name="Davis C.R."/>
            <person name="Detter C."/>
            <person name="Do K.F."/>
            <person name="Dobrinski K.P."/>
            <person name="Faza B.I."/>
            <person name="Fitzpatrick K.A."/>
            <person name="Freyermuth S.K."/>
            <person name="Harmer T.L."/>
            <person name="Hauser L.J."/>
            <person name="Huegler M."/>
            <person name="Kerfeld C.A."/>
            <person name="Klotz M.G."/>
            <person name="Kong W.W."/>
            <person name="Land M."/>
            <person name="Lapidus A."/>
            <person name="Larimer F.W."/>
            <person name="Longo D.L."/>
            <person name="Lucas S."/>
            <person name="Malfatti S.A."/>
            <person name="Massey S.E."/>
            <person name="Martin D.D."/>
            <person name="McCuddin Z."/>
            <person name="Meyer F."/>
            <person name="Moore J.L."/>
            <person name="Ocampo L.H. Jr."/>
            <person name="Paul J.H."/>
            <person name="Paulsen I.T."/>
            <person name="Reep D.K."/>
            <person name="Ren Q."/>
            <person name="Ross R.L."/>
            <person name="Sato P.Y."/>
            <person name="Thomas P."/>
            <person name="Tinkham L.E."/>
            <person name="Zeruth G.T."/>
        </authorList>
    </citation>
    <scope>NUCLEOTIDE SEQUENCE [LARGE SCALE GENOMIC DNA]</scope>
    <source>
        <strain>DSM 25203 / XCL-2</strain>
    </source>
</reference>
<gene>
    <name evidence="1" type="primary">lolD</name>
    <name type="ordered locus">Tcr_1173</name>
</gene>
<evidence type="ECO:0000255" key="1">
    <source>
        <dbReference type="HAMAP-Rule" id="MF_01708"/>
    </source>
</evidence>
<proteinExistence type="inferred from homology"/>
<accession>Q31GF5</accession>
<comment type="function">
    <text evidence="1">Part of the ABC transporter complex LolCDE involved in the translocation of mature outer membrane-directed lipoproteins, from the inner membrane to the periplasmic chaperone, LolA. Responsible for the formation of the LolA-lipoprotein complex in an ATP-dependent manner.</text>
</comment>
<comment type="subunit">
    <text evidence="1">The complex is composed of two ATP-binding proteins (LolD) and two transmembrane proteins (LolC and LolE).</text>
</comment>
<comment type="subcellular location">
    <subcellularLocation>
        <location evidence="1">Cell inner membrane</location>
        <topology evidence="1">Peripheral membrane protein</topology>
    </subcellularLocation>
</comment>
<comment type="similarity">
    <text evidence="1">Belongs to the ABC transporter superfamily. Lipoprotein translocase (TC 3.A.1.125) family.</text>
</comment>
<dbReference type="EC" id="7.6.2.-" evidence="1"/>
<dbReference type="EMBL" id="CP000109">
    <property type="protein sequence ID" value="ABB41768.1"/>
    <property type="molecule type" value="Genomic_DNA"/>
</dbReference>
<dbReference type="SMR" id="Q31GF5"/>
<dbReference type="STRING" id="317025.Tcr_1173"/>
<dbReference type="KEGG" id="tcx:Tcr_1173"/>
<dbReference type="eggNOG" id="COG1136">
    <property type="taxonomic scope" value="Bacteria"/>
</dbReference>
<dbReference type="HOGENOM" id="CLU_000604_1_22_6"/>
<dbReference type="OrthoDB" id="9801477at2"/>
<dbReference type="GO" id="GO:0005886">
    <property type="term" value="C:plasma membrane"/>
    <property type="evidence" value="ECO:0007669"/>
    <property type="project" value="UniProtKB-SubCell"/>
</dbReference>
<dbReference type="GO" id="GO:0005524">
    <property type="term" value="F:ATP binding"/>
    <property type="evidence" value="ECO:0007669"/>
    <property type="project" value="UniProtKB-KW"/>
</dbReference>
<dbReference type="GO" id="GO:0016887">
    <property type="term" value="F:ATP hydrolysis activity"/>
    <property type="evidence" value="ECO:0007669"/>
    <property type="project" value="InterPro"/>
</dbReference>
<dbReference type="GO" id="GO:0022857">
    <property type="term" value="F:transmembrane transporter activity"/>
    <property type="evidence" value="ECO:0007669"/>
    <property type="project" value="TreeGrafter"/>
</dbReference>
<dbReference type="GO" id="GO:0044874">
    <property type="term" value="P:lipoprotein localization to outer membrane"/>
    <property type="evidence" value="ECO:0007669"/>
    <property type="project" value="TreeGrafter"/>
</dbReference>
<dbReference type="GO" id="GO:0089705">
    <property type="term" value="P:protein localization to outer membrane"/>
    <property type="evidence" value="ECO:0007669"/>
    <property type="project" value="TreeGrafter"/>
</dbReference>
<dbReference type="CDD" id="cd03255">
    <property type="entry name" value="ABC_MJ0796_LolCDE_FtsE"/>
    <property type="match status" value="1"/>
</dbReference>
<dbReference type="FunFam" id="3.40.50.300:FF:000230">
    <property type="entry name" value="Lipoprotein-releasing system ATP-binding protein LolD"/>
    <property type="match status" value="1"/>
</dbReference>
<dbReference type="Gene3D" id="3.40.50.300">
    <property type="entry name" value="P-loop containing nucleotide triphosphate hydrolases"/>
    <property type="match status" value="1"/>
</dbReference>
<dbReference type="InterPro" id="IPR003593">
    <property type="entry name" value="AAA+_ATPase"/>
</dbReference>
<dbReference type="InterPro" id="IPR003439">
    <property type="entry name" value="ABC_transporter-like_ATP-bd"/>
</dbReference>
<dbReference type="InterPro" id="IPR017871">
    <property type="entry name" value="ABC_transporter-like_CS"/>
</dbReference>
<dbReference type="InterPro" id="IPR015854">
    <property type="entry name" value="ABC_transpr_LolD-like"/>
</dbReference>
<dbReference type="InterPro" id="IPR011924">
    <property type="entry name" value="LolD_lipo_ATP-bd"/>
</dbReference>
<dbReference type="InterPro" id="IPR017911">
    <property type="entry name" value="MacB-like_ATP-bd"/>
</dbReference>
<dbReference type="InterPro" id="IPR027417">
    <property type="entry name" value="P-loop_NTPase"/>
</dbReference>
<dbReference type="NCBIfam" id="TIGR02211">
    <property type="entry name" value="LolD_lipo_ex"/>
    <property type="match status" value="1"/>
</dbReference>
<dbReference type="PANTHER" id="PTHR24220">
    <property type="entry name" value="IMPORT ATP-BINDING PROTEIN"/>
    <property type="match status" value="1"/>
</dbReference>
<dbReference type="PANTHER" id="PTHR24220:SF689">
    <property type="entry name" value="LIPOPROTEIN-RELEASING SYSTEM ATP-BINDING PROTEIN LOLD"/>
    <property type="match status" value="1"/>
</dbReference>
<dbReference type="Pfam" id="PF00005">
    <property type="entry name" value="ABC_tran"/>
    <property type="match status" value="1"/>
</dbReference>
<dbReference type="SMART" id="SM00382">
    <property type="entry name" value="AAA"/>
    <property type="match status" value="1"/>
</dbReference>
<dbReference type="SUPFAM" id="SSF52540">
    <property type="entry name" value="P-loop containing nucleoside triphosphate hydrolases"/>
    <property type="match status" value="1"/>
</dbReference>
<dbReference type="PROSITE" id="PS00211">
    <property type="entry name" value="ABC_TRANSPORTER_1"/>
    <property type="match status" value="1"/>
</dbReference>
<dbReference type="PROSITE" id="PS50893">
    <property type="entry name" value="ABC_TRANSPORTER_2"/>
    <property type="match status" value="1"/>
</dbReference>
<dbReference type="PROSITE" id="PS51244">
    <property type="entry name" value="LOLD"/>
    <property type="match status" value="1"/>
</dbReference>
<sequence>MSDLILQASNLEKEYRDGKLKTPVIKGLDFELRANEKVAIVGSSGSGKSTLLHLLAGLDKPTGGTVSLMSQAFSGLNEVKRGRLRNQYMGFVYQFHFLLPELNALENVMLPLRVRRTPSKDAEKQASALLDRVGLGHRIHHKPSELSGGERQRVAIARALITKPACVLADEPTGNLDESSAQQVFDLMLELNQEQNTALLVVTHDLKLAAKMDRQYQLTEGHFILPSETL</sequence>
<protein>
    <recommendedName>
        <fullName evidence="1">Lipoprotein-releasing system ATP-binding protein LolD</fullName>
        <ecNumber evidence="1">7.6.2.-</ecNumber>
    </recommendedName>
</protein>
<organism>
    <name type="scientific">Hydrogenovibrio crunogenus (strain DSM 25203 / XCL-2)</name>
    <name type="common">Thiomicrospira crunogena</name>
    <dbReference type="NCBI Taxonomy" id="317025"/>
    <lineage>
        <taxon>Bacteria</taxon>
        <taxon>Pseudomonadati</taxon>
        <taxon>Pseudomonadota</taxon>
        <taxon>Gammaproteobacteria</taxon>
        <taxon>Thiotrichales</taxon>
        <taxon>Piscirickettsiaceae</taxon>
        <taxon>Hydrogenovibrio</taxon>
    </lineage>
</organism>
<feature type="chain" id="PRO_0000272162" description="Lipoprotein-releasing system ATP-binding protein LolD">
    <location>
        <begin position="1"/>
        <end position="230"/>
    </location>
</feature>
<feature type="domain" description="ABC transporter" evidence="1">
    <location>
        <begin position="6"/>
        <end position="230"/>
    </location>
</feature>
<feature type="binding site" evidence="1">
    <location>
        <begin position="42"/>
        <end position="49"/>
    </location>
    <ligand>
        <name>ATP</name>
        <dbReference type="ChEBI" id="CHEBI:30616"/>
    </ligand>
</feature>
<keyword id="KW-0067">ATP-binding</keyword>
<keyword id="KW-0997">Cell inner membrane</keyword>
<keyword id="KW-1003">Cell membrane</keyword>
<keyword id="KW-0472">Membrane</keyword>
<keyword id="KW-0547">Nucleotide-binding</keyword>
<keyword id="KW-1278">Translocase</keyword>
<keyword id="KW-0813">Transport</keyword>